<evidence type="ECO:0000255" key="1">
    <source>
        <dbReference type="HAMAP-Rule" id="MF_04089"/>
    </source>
</evidence>
<proteinExistence type="inferred from homology"/>
<organism>
    <name type="scientific">Rotavirus A (strain RVA/Cow/United States/WC3/1981/G6P7[5])</name>
    <name type="common">RV-A</name>
    <name type="synonym">Rotavirus (strain Wistar calf 3)</name>
    <dbReference type="NCBI Taxonomy" id="578828"/>
    <lineage>
        <taxon>Viruses</taxon>
        <taxon>Riboviria</taxon>
        <taxon>Orthornavirae</taxon>
        <taxon>Duplornaviricota</taxon>
        <taxon>Resentoviricetes</taxon>
        <taxon>Reovirales</taxon>
        <taxon>Sedoreoviridae</taxon>
        <taxon>Rotavirus</taxon>
        <taxon>Rotavirus A</taxon>
    </lineage>
</organism>
<keyword id="KW-0067">ATP-binding</keyword>
<keyword id="KW-1035">Host cytoplasm</keyword>
<keyword id="KW-0378">Hydrolase</keyword>
<keyword id="KW-0460">Magnesium</keyword>
<keyword id="KW-0479">Metal-binding</keyword>
<keyword id="KW-0547">Nucleotide-binding</keyword>
<keyword id="KW-0694">RNA-binding</keyword>
<accession>B2BRG3</accession>
<organismHost>
    <name type="scientific">Bos taurus</name>
    <name type="common">Bovine</name>
    <dbReference type="NCBI Taxonomy" id="9913"/>
</organismHost>
<reference key="1">
    <citation type="journal article" date="2008" name="J. Virol.">
        <title>Full genome-based classification of rotaviruses reveals a common origin between human Wa-Like and porcine rotavirus strains and human DS-1-like and bovine rotavirus strains.</title>
        <authorList>
            <person name="Matthijnssens J."/>
            <person name="Ciarlet M."/>
            <person name="Heiman E.M."/>
            <person name="Arijs I."/>
            <person name="Delbeke T."/>
            <person name="McDonald S.M."/>
            <person name="Palombo E.A."/>
            <person name="Iturriza-Gomara M."/>
            <person name="Maes P."/>
            <person name="Patton J.T."/>
            <person name="Rahman M."/>
            <person name="Van Ranst M."/>
        </authorList>
    </citation>
    <scope>NUCLEOTIDE SEQUENCE [GENOMIC RNA]</scope>
</reference>
<feature type="chain" id="PRO_0000369533" description="Non-structural protein 2">
    <location>
        <begin position="1"/>
        <end position="317"/>
    </location>
</feature>
<feature type="region of interest" description="RNA-binding" evidence="1">
    <location>
        <begin position="205"/>
        <end position="241"/>
    </location>
</feature>
<feature type="active site" description="For NTPase and RTPase activities" evidence="1">
    <location>
        <position position="225"/>
    </location>
</feature>
<feature type="binding site" evidence="1">
    <location>
        <begin position="107"/>
        <end position="109"/>
    </location>
    <ligand>
        <name>ATP</name>
        <dbReference type="ChEBI" id="CHEBI:30616"/>
    </ligand>
</feature>
<feature type="binding site" evidence="1">
    <location>
        <position position="188"/>
    </location>
    <ligand>
        <name>ATP</name>
        <dbReference type="ChEBI" id="CHEBI:30616"/>
    </ligand>
</feature>
<feature type="binding site" evidence="1">
    <location>
        <begin position="221"/>
        <end position="223"/>
    </location>
    <ligand>
        <name>ATP</name>
        <dbReference type="ChEBI" id="CHEBI:30616"/>
    </ligand>
</feature>
<feature type="binding site" evidence="1">
    <location>
        <position position="227"/>
    </location>
    <ligand>
        <name>ATP</name>
        <dbReference type="ChEBI" id="CHEBI:30616"/>
    </ligand>
</feature>
<name>NSP2_ROTW3</name>
<dbReference type="EC" id="3.6.4.-" evidence="1"/>
<dbReference type="EMBL" id="EF990700">
    <property type="protein sequence ID" value="ABV66082.1"/>
    <property type="molecule type" value="Genomic_RNA"/>
</dbReference>
<dbReference type="SMR" id="B2BRG3"/>
<dbReference type="Proteomes" id="UP000007181">
    <property type="component" value="Genome"/>
</dbReference>
<dbReference type="GO" id="GO:0030430">
    <property type="term" value="C:host cell cytoplasm"/>
    <property type="evidence" value="ECO:0007669"/>
    <property type="project" value="UniProtKB-SubCell"/>
</dbReference>
<dbReference type="GO" id="GO:0005524">
    <property type="term" value="F:ATP binding"/>
    <property type="evidence" value="ECO:0007669"/>
    <property type="project" value="UniProtKB-KW"/>
</dbReference>
<dbReference type="GO" id="GO:0046872">
    <property type="term" value="F:metal ion binding"/>
    <property type="evidence" value="ECO:0007669"/>
    <property type="project" value="UniProtKB-UniRule"/>
</dbReference>
<dbReference type="GO" id="GO:0004550">
    <property type="term" value="F:nucleoside diphosphate kinase activity"/>
    <property type="evidence" value="ECO:0007669"/>
    <property type="project" value="InterPro"/>
</dbReference>
<dbReference type="GO" id="GO:0017111">
    <property type="term" value="F:ribonucleoside triphosphate phosphatase activity"/>
    <property type="evidence" value="ECO:0007669"/>
    <property type="project" value="InterPro"/>
</dbReference>
<dbReference type="GO" id="GO:0003723">
    <property type="term" value="F:RNA binding"/>
    <property type="evidence" value="ECO:0007669"/>
    <property type="project" value="UniProtKB-UniRule"/>
</dbReference>
<dbReference type="GO" id="GO:0019079">
    <property type="term" value="P:viral genome replication"/>
    <property type="evidence" value="ECO:0007669"/>
    <property type="project" value="UniProtKB-UniRule"/>
</dbReference>
<dbReference type="Gene3D" id="3.30.428.20">
    <property type="entry name" value="Rotavirus NSP2 fragment, C-terminal domain"/>
    <property type="match status" value="1"/>
</dbReference>
<dbReference type="Gene3D" id="3.90.1400.10">
    <property type="entry name" value="Rotavirus NSP2 fragment, N-terminal domain"/>
    <property type="match status" value="1"/>
</dbReference>
<dbReference type="HAMAP" id="MF_04089">
    <property type="entry name" value="ROTA_NSP2"/>
    <property type="match status" value="1"/>
</dbReference>
<dbReference type="InterPro" id="IPR048306">
    <property type="entry name" value="Rota_NS35_C"/>
</dbReference>
<dbReference type="InterPro" id="IPR048573">
    <property type="entry name" value="Rota_NS35_N"/>
</dbReference>
<dbReference type="InterPro" id="IPR003668">
    <property type="entry name" value="Rotavirus_NSP2"/>
</dbReference>
<dbReference type="InterPro" id="IPR024076">
    <property type="entry name" value="Rotavirus_NSP2_C"/>
</dbReference>
<dbReference type="InterPro" id="IPR024068">
    <property type="entry name" value="Rotavirus_NSP2_N"/>
</dbReference>
<dbReference type="Pfam" id="PF02509">
    <property type="entry name" value="Rota_NS35_C"/>
    <property type="match status" value="1"/>
</dbReference>
<dbReference type="Pfam" id="PF21067">
    <property type="entry name" value="Rota_NS35_N"/>
    <property type="match status" value="1"/>
</dbReference>
<dbReference type="SUPFAM" id="SSF75347">
    <property type="entry name" value="Rotavirus NSP2 fragment, C-terminal domain"/>
    <property type="match status" value="1"/>
</dbReference>
<dbReference type="SUPFAM" id="SSF75574">
    <property type="entry name" value="Rotavirus NSP2 fragment, N-terminal domain"/>
    <property type="match status" value="1"/>
</dbReference>
<protein>
    <recommendedName>
        <fullName evidence="1">Non-structural protein 2</fullName>
        <shortName evidence="1">NSP2</shortName>
        <ecNumber evidence="1">3.6.4.-</ecNumber>
    </recommendedName>
    <alternativeName>
        <fullName evidence="1">NCVP3</fullName>
    </alternativeName>
    <alternativeName>
        <fullName evidence="1">Non-structural RNA-binding protein 35</fullName>
        <shortName evidence="1">NS35</shortName>
    </alternativeName>
</protein>
<sequence length="317" mass="36671">MAELACFCYPHLENDSYRFIPFNSLAIKCMLTAKVDKKDQDKFYNSIIYGIAPPPQFKKRYNTNDNSRGMNYETPMFNKVAVLICEALNSIKVTQSDVASVLSKVVSVRHLENLVRRRENHQDVLFHSKELLLKSVLIAIGHSKEIETTATAEGGEVVFQNAAFTMWKLTYLEHSLMPILDQNFIEYKITMNEDKPISESHVKELIAELRWQYNKFAVITHGKGHYRVVKYSSVANHADRVYATFKSNNKNGNMIEFNLLDQRIIWQNWYAFTSSMKQGNTLEVCKKLLFQKMKRESNPFKGLSTDRKMDEVSQIGI</sequence>
<comment type="function">
    <text evidence="1">Participates in replication and packaging of the viral genome. Plays a crucial role, together with NSP5, in the formation of virus factories (viroplasms), which are large inclusions in the host cytoplasm where replication intermediates are assembled and viral RNA replication takes place. Displays ssRNA binding, NTPase, RNA triphosphatase (RTPase) and ATP-independent helix-unwinding activities. The unwinding activity may prepare and organize plus-strand RNAs for packaging and replication by removing interfering secondary structures. The RTPase activity plays a role in the removal of the gamma-phosphate from the rotavirus RNA minus strands of dsRNA genome segments. Participates in the selective exclusion of host proteins from stress granules (SG) and P bodies (PB). Also participates in the sequestration of these remodeled organelles in viral factories.</text>
</comment>
<comment type="cofactor">
    <cofactor evidence="1">
        <name>Mg(2+)</name>
        <dbReference type="ChEBI" id="CHEBI:18420"/>
    </cofactor>
</comment>
<comment type="subunit">
    <text evidence="1">Homooctamer. Interacts with VP1; this interaction is weak. Interacts with NSP5; this interaction leads to up-regulation of NSP5 phosphorylation and formation of viral factories. Interacts with host DCP1A, DCP1B, DDX6, EDC4 and EIF2S1/eIF2-alpha; these interactions are probably part of the sequestration of some host SGs and PBs proteins in viral factories.</text>
</comment>
<comment type="subcellular location">
    <subcellularLocation>
        <location evidence="1">Host cytoplasm</location>
    </subcellularLocation>
    <text evidence="1">Found in spherical cytoplasmic structures, called viral factories, that appear early after infection and are the site of viral replication and packaging.</text>
</comment>
<comment type="similarity">
    <text evidence="1">Belongs to the rotavirus NSP2 family.</text>
</comment>